<gene>
    <name evidence="1" type="primary">dnaJ</name>
    <name type="ordered locus">NIS_1186</name>
</gene>
<name>DNAJ_NITSB</name>
<protein>
    <recommendedName>
        <fullName evidence="1">Chaperone protein DnaJ</fullName>
    </recommendedName>
</protein>
<comment type="function">
    <text evidence="1">Participates actively in the response to hyperosmotic and heat shock by preventing the aggregation of stress-denatured proteins and by disaggregating proteins, also in an autonomous, DnaK-independent fashion. Unfolded proteins bind initially to DnaJ; upon interaction with the DnaJ-bound protein, DnaK hydrolyzes its bound ATP, resulting in the formation of a stable complex. GrpE releases ADP from DnaK; ATP binding to DnaK triggers the release of the substrate protein, thus completing the reaction cycle. Several rounds of ATP-dependent interactions between DnaJ, DnaK and GrpE are required for fully efficient folding. Also involved, together with DnaK and GrpE, in the DNA replication of plasmids through activation of initiation proteins.</text>
</comment>
<comment type="cofactor">
    <cofactor evidence="1">
        <name>Zn(2+)</name>
        <dbReference type="ChEBI" id="CHEBI:29105"/>
    </cofactor>
    <text evidence="1">Binds 2 Zn(2+) ions per monomer.</text>
</comment>
<comment type="subunit">
    <text evidence="1">Homodimer.</text>
</comment>
<comment type="subcellular location">
    <subcellularLocation>
        <location evidence="1">Cytoplasm</location>
    </subcellularLocation>
</comment>
<comment type="domain">
    <text evidence="1">The J domain is necessary and sufficient to stimulate DnaK ATPase activity. Zinc center 1 plays an important role in the autonomous, DnaK-independent chaperone activity of DnaJ. Zinc center 2 is essential for interaction with DnaK and for DnaJ activity.</text>
</comment>
<comment type="similarity">
    <text evidence="1">Belongs to the DnaJ family.</text>
</comment>
<organism>
    <name type="scientific">Nitratiruptor sp. (strain SB155-2)</name>
    <dbReference type="NCBI Taxonomy" id="387092"/>
    <lineage>
        <taxon>Bacteria</taxon>
        <taxon>Pseudomonadati</taxon>
        <taxon>Campylobacterota</taxon>
        <taxon>Epsilonproteobacteria</taxon>
        <taxon>Nautiliales</taxon>
        <taxon>Nitratiruptoraceae</taxon>
        <taxon>Nitratiruptor</taxon>
    </lineage>
</organism>
<evidence type="ECO:0000255" key="1">
    <source>
        <dbReference type="HAMAP-Rule" id="MF_01152"/>
    </source>
</evidence>
<reference key="1">
    <citation type="journal article" date="2007" name="Proc. Natl. Acad. Sci. U.S.A.">
        <title>Deep-sea vent epsilon-proteobacterial genomes provide insights into emergence of pathogens.</title>
        <authorList>
            <person name="Nakagawa S."/>
            <person name="Takaki Y."/>
            <person name="Shimamura S."/>
            <person name="Reysenbach A.-L."/>
            <person name="Takai K."/>
            <person name="Horikoshi K."/>
        </authorList>
    </citation>
    <scope>NUCLEOTIDE SEQUENCE [LARGE SCALE GENOMIC DNA]</scope>
    <source>
        <strain>SB155-2</strain>
    </source>
</reference>
<keyword id="KW-0143">Chaperone</keyword>
<keyword id="KW-0963">Cytoplasm</keyword>
<keyword id="KW-0235">DNA replication</keyword>
<keyword id="KW-0479">Metal-binding</keyword>
<keyword id="KW-1185">Reference proteome</keyword>
<keyword id="KW-0677">Repeat</keyword>
<keyword id="KW-0346">Stress response</keyword>
<keyword id="KW-0862">Zinc</keyword>
<keyword id="KW-0863">Zinc-finger</keyword>
<dbReference type="EMBL" id="AP009178">
    <property type="protein sequence ID" value="BAF70295.1"/>
    <property type="molecule type" value="Genomic_DNA"/>
</dbReference>
<dbReference type="RefSeq" id="WP_012082558.1">
    <property type="nucleotide sequence ID" value="NC_009662.1"/>
</dbReference>
<dbReference type="SMR" id="A6Q486"/>
<dbReference type="FunCoup" id="A6Q486">
    <property type="interactions" value="474"/>
</dbReference>
<dbReference type="STRING" id="387092.NIS_1186"/>
<dbReference type="KEGG" id="nis:NIS_1186"/>
<dbReference type="eggNOG" id="COG0484">
    <property type="taxonomic scope" value="Bacteria"/>
</dbReference>
<dbReference type="HOGENOM" id="CLU_017633_0_7_7"/>
<dbReference type="InParanoid" id="A6Q486"/>
<dbReference type="OrthoDB" id="9779889at2"/>
<dbReference type="Proteomes" id="UP000001118">
    <property type="component" value="Chromosome"/>
</dbReference>
<dbReference type="GO" id="GO:0005737">
    <property type="term" value="C:cytoplasm"/>
    <property type="evidence" value="ECO:0007669"/>
    <property type="project" value="UniProtKB-SubCell"/>
</dbReference>
<dbReference type="GO" id="GO:0005524">
    <property type="term" value="F:ATP binding"/>
    <property type="evidence" value="ECO:0007669"/>
    <property type="project" value="InterPro"/>
</dbReference>
<dbReference type="GO" id="GO:0031072">
    <property type="term" value="F:heat shock protein binding"/>
    <property type="evidence" value="ECO:0007669"/>
    <property type="project" value="InterPro"/>
</dbReference>
<dbReference type="GO" id="GO:0051082">
    <property type="term" value="F:unfolded protein binding"/>
    <property type="evidence" value="ECO:0007669"/>
    <property type="project" value="UniProtKB-UniRule"/>
</dbReference>
<dbReference type="GO" id="GO:0008270">
    <property type="term" value="F:zinc ion binding"/>
    <property type="evidence" value="ECO:0007669"/>
    <property type="project" value="UniProtKB-UniRule"/>
</dbReference>
<dbReference type="GO" id="GO:0051085">
    <property type="term" value="P:chaperone cofactor-dependent protein refolding"/>
    <property type="evidence" value="ECO:0007669"/>
    <property type="project" value="TreeGrafter"/>
</dbReference>
<dbReference type="GO" id="GO:0006260">
    <property type="term" value="P:DNA replication"/>
    <property type="evidence" value="ECO:0007669"/>
    <property type="project" value="UniProtKB-KW"/>
</dbReference>
<dbReference type="GO" id="GO:0042026">
    <property type="term" value="P:protein refolding"/>
    <property type="evidence" value="ECO:0007669"/>
    <property type="project" value="TreeGrafter"/>
</dbReference>
<dbReference type="GO" id="GO:0009408">
    <property type="term" value="P:response to heat"/>
    <property type="evidence" value="ECO:0007669"/>
    <property type="project" value="InterPro"/>
</dbReference>
<dbReference type="CDD" id="cd06257">
    <property type="entry name" value="DnaJ"/>
    <property type="match status" value="1"/>
</dbReference>
<dbReference type="CDD" id="cd10747">
    <property type="entry name" value="DnaJ_C"/>
    <property type="match status" value="1"/>
</dbReference>
<dbReference type="CDD" id="cd10719">
    <property type="entry name" value="DnaJ_zf"/>
    <property type="match status" value="1"/>
</dbReference>
<dbReference type="FunFam" id="1.10.287.110:FF:000034">
    <property type="entry name" value="Chaperone protein DnaJ"/>
    <property type="match status" value="1"/>
</dbReference>
<dbReference type="FunFam" id="2.60.260.20:FF:000013">
    <property type="entry name" value="DnaJ subfamily B member 11"/>
    <property type="match status" value="1"/>
</dbReference>
<dbReference type="FunFam" id="2.10.230.10:FF:000002">
    <property type="entry name" value="Molecular chaperone DnaJ"/>
    <property type="match status" value="1"/>
</dbReference>
<dbReference type="Gene3D" id="1.10.287.110">
    <property type="entry name" value="DnaJ domain"/>
    <property type="match status" value="1"/>
</dbReference>
<dbReference type="Gene3D" id="2.10.230.10">
    <property type="entry name" value="Heat shock protein DnaJ, cysteine-rich domain"/>
    <property type="match status" value="1"/>
</dbReference>
<dbReference type="Gene3D" id="2.60.260.20">
    <property type="entry name" value="Urease metallochaperone UreE, N-terminal domain"/>
    <property type="match status" value="2"/>
</dbReference>
<dbReference type="HAMAP" id="MF_01152">
    <property type="entry name" value="DnaJ"/>
    <property type="match status" value="1"/>
</dbReference>
<dbReference type="InterPro" id="IPR012724">
    <property type="entry name" value="DnaJ"/>
</dbReference>
<dbReference type="InterPro" id="IPR002939">
    <property type="entry name" value="DnaJ_C"/>
</dbReference>
<dbReference type="InterPro" id="IPR001623">
    <property type="entry name" value="DnaJ_domain"/>
</dbReference>
<dbReference type="InterPro" id="IPR018253">
    <property type="entry name" value="DnaJ_domain_CS"/>
</dbReference>
<dbReference type="InterPro" id="IPR008971">
    <property type="entry name" value="HSP40/DnaJ_pept-bd"/>
</dbReference>
<dbReference type="InterPro" id="IPR001305">
    <property type="entry name" value="HSP_DnaJ_Cys-rich_dom"/>
</dbReference>
<dbReference type="InterPro" id="IPR036410">
    <property type="entry name" value="HSP_DnaJ_Cys-rich_dom_sf"/>
</dbReference>
<dbReference type="InterPro" id="IPR036869">
    <property type="entry name" value="J_dom_sf"/>
</dbReference>
<dbReference type="NCBIfam" id="TIGR02349">
    <property type="entry name" value="DnaJ_bact"/>
    <property type="match status" value="1"/>
</dbReference>
<dbReference type="NCBIfam" id="NF008035">
    <property type="entry name" value="PRK10767.1"/>
    <property type="match status" value="1"/>
</dbReference>
<dbReference type="PANTHER" id="PTHR43096:SF48">
    <property type="entry name" value="CHAPERONE PROTEIN DNAJ"/>
    <property type="match status" value="1"/>
</dbReference>
<dbReference type="PANTHER" id="PTHR43096">
    <property type="entry name" value="DNAJ HOMOLOG 1, MITOCHONDRIAL-RELATED"/>
    <property type="match status" value="1"/>
</dbReference>
<dbReference type="Pfam" id="PF00226">
    <property type="entry name" value="DnaJ"/>
    <property type="match status" value="1"/>
</dbReference>
<dbReference type="Pfam" id="PF01556">
    <property type="entry name" value="DnaJ_C"/>
    <property type="match status" value="1"/>
</dbReference>
<dbReference type="Pfam" id="PF00684">
    <property type="entry name" value="DnaJ_CXXCXGXG"/>
    <property type="match status" value="1"/>
</dbReference>
<dbReference type="PRINTS" id="PR00625">
    <property type="entry name" value="JDOMAIN"/>
</dbReference>
<dbReference type="SMART" id="SM00271">
    <property type="entry name" value="DnaJ"/>
    <property type="match status" value="1"/>
</dbReference>
<dbReference type="SUPFAM" id="SSF46565">
    <property type="entry name" value="Chaperone J-domain"/>
    <property type="match status" value="1"/>
</dbReference>
<dbReference type="SUPFAM" id="SSF57938">
    <property type="entry name" value="DnaJ/Hsp40 cysteine-rich domain"/>
    <property type="match status" value="1"/>
</dbReference>
<dbReference type="SUPFAM" id="SSF49493">
    <property type="entry name" value="HSP40/DnaJ peptide-binding domain"/>
    <property type="match status" value="2"/>
</dbReference>
<dbReference type="PROSITE" id="PS00636">
    <property type="entry name" value="DNAJ_1"/>
    <property type="match status" value="1"/>
</dbReference>
<dbReference type="PROSITE" id="PS50076">
    <property type="entry name" value="DNAJ_2"/>
    <property type="match status" value="1"/>
</dbReference>
<dbReference type="PROSITE" id="PS51188">
    <property type="entry name" value="ZF_CR"/>
    <property type="match status" value="1"/>
</dbReference>
<proteinExistence type="inferred from homology"/>
<feature type="chain" id="PRO_1000085235" description="Chaperone protein DnaJ">
    <location>
        <begin position="1"/>
        <end position="373"/>
    </location>
</feature>
<feature type="domain" description="J" evidence="1">
    <location>
        <begin position="5"/>
        <end position="70"/>
    </location>
</feature>
<feature type="repeat" description="CXXCXGXG motif">
    <location>
        <begin position="147"/>
        <end position="154"/>
    </location>
</feature>
<feature type="repeat" description="CXXCXGXG motif">
    <location>
        <begin position="163"/>
        <end position="170"/>
    </location>
</feature>
<feature type="repeat" description="CXXCXGXG motif">
    <location>
        <begin position="185"/>
        <end position="192"/>
    </location>
</feature>
<feature type="repeat" description="CXXCXGXG motif">
    <location>
        <begin position="199"/>
        <end position="206"/>
    </location>
</feature>
<feature type="zinc finger region" description="CR-type" evidence="1">
    <location>
        <begin position="134"/>
        <end position="211"/>
    </location>
</feature>
<feature type="binding site" evidence="1">
    <location>
        <position position="147"/>
    </location>
    <ligand>
        <name>Zn(2+)</name>
        <dbReference type="ChEBI" id="CHEBI:29105"/>
        <label>1</label>
    </ligand>
</feature>
<feature type="binding site" evidence="1">
    <location>
        <position position="150"/>
    </location>
    <ligand>
        <name>Zn(2+)</name>
        <dbReference type="ChEBI" id="CHEBI:29105"/>
        <label>1</label>
    </ligand>
</feature>
<feature type="binding site" evidence="1">
    <location>
        <position position="163"/>
    </location>
    <ligand>
        <name>Zn(2+)</name>
        <dbReference type="ChEBI" id="CHEBI:29105"/>
        <label>2</label>
    </ligand>
</feature>
<feature type="binding site" evidence="1">
    <location>
        <position position="166"/>
    </location>
    <ligand>
        <name>Zn(2+)</name>
        <dbReference type="ChEBI" id="CHEBI:29105"/>
        <label>2</label>
    </ligand>
</feature>
<feature type="binding site" evidence="1">
    <location>
        <position position="185"/>
    </location>
    <ligand>
        <name>Zn(2+)</name>
        <dbReference type="ChEBI" id="CHEBI:29105"/>
        <label>2</label>
    </ligand>
</feature>
<feature type="binding site" evidence="1">
    <location>
        <position position="188"/>
    </location>
    <ligand>
        <name>Zn(2+)</name>
        <dbReference type="ChEBI" id="CHEBI:29105"/>
        <label>2</label>
    </ligand>
</feature>
<feature type="binding site" evidence="1">
    <location>
        <position position="199"/>
    </location>
    <ligand>
        <name>Zn(2+)</name>
        <dbReference type="ChEBI" id="CHEBI:29105"/>
        <label>1</label>
    </ligand>
</feature>
<feature type="binding site" evidence="1">
    <location>
        <position position="202"/>
    </location>
    <ligand>
        <name>Zn(2+)</name>
        <dbReference type="ChEBI" id="CHEBI:29105"/>
        <label>1</label>
    </ligand>
</feature>
<accession>A6Q486</accession>
<sequence length="373" mass="42667">MVDIDYYELLEVDRNASFEEIKKAYRKLALKYHPDRNPDNPEAEEKFKLINEAYQVLSDEEKRALYDQYGKAGLENQGFSGFNQKSFDDIMDFFESVFGETFGGGFGSRRRSDEKYPLDLSIEMEISFQEALFGTQKEVHYSFKVPCSACKGTGAKDGKLTACPECHGRGQIYYRQGFMTFSQTCPRCHGQGEVAQEHCEECSGKGYRIEKEKITIDIPEGIDSGNRIRAQSRGNVSASGMRGDLYITVFVQEDDHFVRYNDDIYMEVPIFFTQAALGETITIPTPRGERELQLNVGTKDKEQFVFKGEGFKNVHTGKKGNLIAQVKIIYPTSLNDEQKELLHKLQESFGVESKPHEEKFSSIFEKVKNWFTK</sequence>